<reference key="1">
    <citation type="journal article" date="2004" name="Proc. Natl. Acad. Sci. U.S.A.">
        <title>Complete genomes of two clinical Staphylococcus aureus strains: evidence for the rapid evolution of virulence and drug resistance.</title>
        <authorList>
            <person name="Holden M.T.G."/>
            <person name="Feil E.J."/>
            <person name="Lindsay J.A."/>
            <person name="Peacock S.J."/>
            <person name="Day N.P.J."/>
            <person name="Enright M.C."/>
            <person name="Foster T.J."/>
            <person name="Moore C.E."/>
            <person name="Hurst L."/>
            <person name="Atkin R."/>
            <person name="Barron A."/>
            <person name="Bason N."/>
            <person name="Bentley S.D."/>
            <person name="Chillingworth C."/>
            <person name="Chillingworth T."/>
            <person name="Churcher C."/>
            <person name="Clark L."/>
            <person name="Corton C."/>
            <person name="Cronin A."/>
            <person name="Doggett J."/>
            <person name="Dowd L."/>
            <person name="Feltwell T."/>
            <person name="Hance Z."/>
            <person name="Harris B."/>
            <person name="Hauser H."/>
            <person name="Holroyd S."/>
            <person name="Jagels K."/>
            <person name="James K.D."/>
            <person name="Lennard N."/>
            <person name="Line A."/>
            <person name="Mayes R."/>
            <person name="Moule S."/>
            <person name="Mungall K."/>
            <person name="Ormond D."/>
            <person name="Quail M.A."/>
            <person name="Rabbinowitsch E."/>
            <person name="Rutherford K.M."/>
            <person name="Sanders M."/>
            <person name="Sharp S."/>
            <person name="Simmonds M."/>
            <person name="Stevens K."/>
            <person name="Whitehead S."/>
            <person name="Barrell B.G."/>
            <person name="Spratt B.G."/>
            <person name="Parkhill J."/>
        </authorList>
    </citation>
    <scope>NUCLEOTIDE SEQUENCE [LARGE SCALE GENOMIC DNA]</scope>
    <source>
        <strain>MSSA476</strain>
    </source>
</reference>
<sequence length="315" mass="35598">MLKNKILATTLSVSLLAPLANPLLENAKAANDTEEIGKGSDIEIIKRTEDKTSNKWGVTQNIQFDFVKDKKYNKDALILKMQGFISSRTTYYNYKKTNHVKAMRWPFQYNIGLKTNDKYVSLINYLPKNKIESTNVSQTLGYNIGGNFQSAPSLGGNGSFNYSKSISYTQQNYVSEVEQQNSKSVLWGVKANSFATESGQKSAFDSDLFVGYKPHSKDPRDYFVPDSELPPLVQSGFNPSFIATVSHEKGSSDTSEFEITYGRNMDVTHAIKRSTHYGNSYLDGHRVHNAFVNRNYTVKYEVNWKTHEIKVKGQN</sequence>
<accession>Q6G6Q1</accession>
<feature type="signal peptide" evidence="2">
    <location>
        <begin position="1"/>
        <end position="29"/>
    </location>
</feature>
<feature type="chain" id="PRO_0000045224" description="Gamma-hemolysin component C">
    <location>
        <begin position="30"/>
        <end position="315"/>
    </location>
</feature>
<name>HLGC_STAAS</name>
<organism>
    <name type="scientific">Staphylococcus aureus (strain MSSA476)</name>
    <dbReference type="NCBI Taxonomy" id="282459"/>
    <lineage>
        <taxon>Bacteria</taxon>
        <taxon>Bacillati</taxon>
        <taxon>Bacillota</taxon>
        <taxon>Bacilli</taxon>
        <taxon>Bacillales</taxon>
        <taxon>Staphylococcaceae</taxon>
        <taxon>Staphylococcus</taxon>
    </lineage>
</organism>
<gene>
    <name type="primary">hlgC</name>
    <name type="ordered locus">SAS2311</name>
</gene>
<proteinExistence type="inferred from homology"/>
<dbReference type="EMBL" id="BX571857">
    <property type="protein sequence ID" value="CAG44124.1"/>
    <property type="molecule type" value="Genomic_DNA"/>
</dbReference>
<dbReference type="RefSeq" id="WP_000916709.1">
    <property type="nucleotide sequence ID" value="NC_002953.3"/>
</dbReference>
<dbReference type="SMR" id="Q6G6Q1"/>
<dbReference type="KEGG" id="sas:SAS2311"/>
<dbReference type="HOGENOM" id="CLU_075311_0_0_9"/>
<dbReference type="GO" id="GO:0005576">
    <property type="term" value="C:extracellular region"/>
    <property type="evidence" value="ECO:0007669"/>
    <property type="project" value="InterPro"/>
</dbReference>
<dbReference type="GO" id="GO:0090729">
    <property type="term" value="F:toxin activity"/>
    <property type="evidence" value="ECO:0007669"/>
    <property type="project" value="UniProtKB-KW"/>
</dbReference>
<dbReference type="GO" id="GO:0051715">
    <property type="term" value="P:cytolysis in another organism"/>
    <property type="evidence" value="ECO:0007669"/>
    <property type="project" value="InterPro"/>
</dbReference>
<dbReference type="Gene3D" id="2.70.240.10">
    <property type="entry name" value="Leukocidin/porin MspA"/>
    <property type="match status" value="1"/>
</dbReference>
<dbReference type="InterPro" id="IPR003963">
    <property type="entry name" value="Bi-component_toxin_staph"/>
</dbReference>
<dbReference type="InterPro" id="IPR016183">
    <property type="entry name" value="Leukocidin/Hemolysin_toxin"/>
</dbReference>
<dbReference type="InterPro" id="IPR036435">
    <property type="entry name" value="Leukocidin/porin_MspA_sf"/>
</dbReference>
<dbReference type="NCBIfam" id="TIGR01002">
    <property type="entry name" value="hlyII"/>
    <property type="match status" value="1"/>
</dbReference>
<dbReference type="Pfam" id="PF07968">
    <property type="entry name" value="Leukocidin"/>
    <property type="match status" value="1"/>
</dbReference>
<dbReference type="PRINTS" id="PR01468">
    <property type="entry name" value="BICOMPNTOXIN"/>
</dbReference>
<dbReference type="SUPFAM" id="SSF56959">
    <property type="entry name" value="Leukocidin-like"/>
    <property type="match status" value="1"/>
</dbReference>
<comment type="function">
    <text evidence="1">Toxin that seems to act by forming pores in the membrane of the cell. Has a hemolytic and a leucotoxic activity (By similarity).</text>
</comment>
<comment type="subunit">
    <text evidence="1">Toxicity requires sequential binding and synergistic association of a class S and a class F component which form heterooligomeric complexes. HlgC (class S) associates with HlgB (class F) thus forming an CB toxin (By similarity).</text>
</comment>
<comment type="similarity">
    <text evidence="3">Belongs to the aerolysin family.</text>
</comment>
<keyword id="KW-0204">Cytolysis</keyword>
<keyword id="KW-0354">Hemolysis</keyword>
<keyword id="KW-0732">Signal</keyword>
<keyword id="KW-0800">Toxin</keyword>
<keyword id="KW-0843">Virulence</keyword>
<protein>
    <recommendedName>
        <fullName>Gamma-hemolysin component C</fullName>
    </recommendedName>
</protein>
<evidence type="ECO:0000250" key="1"/>
<evidence type="ECO:0000255" key="2"/>
<evidence type="ECO:0000305" key="3"/>